<accession>Q2IWC4</accession>
<protein>
    <recommendedName>
        <fullName evidence="1">2-dehydro-3-deoxyphosphooctonate aldolase</fullName>
        <ecNumber evidence="1">2.5.1.55</ecNumber>
    </recommendedName>
    <alternativeName>
        <fullName evidence="1">3-deoxy-D-manno-octulosonic acid 8-phosphate synthase</fullName>
    </alternativeName>
    <alternativeName>
        <fullName evidence="1">KDO-8-phosphate synthase</fullName>
        <shortName evidence="1">KDO 8-P synthase</shortName>
        <shortName evidence="1">KDOPS</shortName>
    </alternativeName>
    <alternativeName>
        <fullName evidence="1">Phospho-2-dehydro-3-deoxyoctonate aldolase</fullName>
    </alternativeName>
</protein>
<name>KDSA_RHOP2</name>
<sequence>MNKSIAPAPVVAAGDVKFGNALPLSVIAGPCQLESRAHALEVAAALQEIGKRLGIGIVYKTSFDKANRTSAASARGIGLDGALPIFAEIRDSIGLPVLTDVHEAGQCARAAEAVDILQIPAFLCRQTDLLLAAAATGRIVNVKKGQFLAPWDMGNVVAKITSAGNPKVLVTERGVSFGYNTLVSDMRALPIMAKTTGAPVIFDATHSVQQPGGKGTSSGGEREFVPVLARAAVAVGVAGVFIETHPDPDHAPSDGPNMVPLRDFESLLRTLMEFDALAKRRSGAGTI</sequence>
<reference key="1">
    <citation type="submission" date="2006-01" db="EMBL/GenBank/DDBJ databases">
        <title>Complete sequence of Rhodopseudomonas palustris HaA2.</title>
        <authorList>
            <consortium name="US DOE Joint Genome Institute"/>
            <person name="Copeland A."/>
            <person name="Lucas S."/>
            <person name="Lapidus A."/>
            <person name="Barry K."/>
            <person name="Detter J.C."/>
            <person name="Glavina T."/>
            <person name="Hammon N."/>
            <person name="Israni S."/>
            <person name="Pitluck S."/>
            <person name="Chain P."/>
            <person name="Malfatti S."/>
            <person name="Shin M."/>
            <person name="Vergez L."/>
            <person name="Schmutz J."/>
            <person name="Larimer F."/>
            <person name="Land M."/>
            <person name="Hauser L."/>
            <person name="Pelletier D.A."/>
            <person name="Kyrpides N."/>
            <person name="Anderson I."/>
            <person name="Oda Y."/>
            <person name="Harwood C.S."/>
            <person name="Richardson P."/>
        </authorList>
    </citation>
    <scope>NUCLEOTIDE SEQUENCE [LARGE SCALE GENOMIC DNA]</scope>
    <source>
        <strain>HaA2</strain>
    </source>
</reference>
<keyword id="KW-0963">Cytoplasm</keyword>
<keyword id="KW-0448">Lipopolysaccharide biosynthesis</keyword>
<keyword id="KW-1185">Reference proteome</keyword>
<keyword id="KW-0808">Transferase</keyword>
<feature type="chain" id="PRO_0000304481" description="2-dehydro-3-deoxyphosphooctonate aldolase">
    <location>
        <begin position="1"/>
        <end position="287"/>
    </location>
</feature>
<evidence type="ECO:0000255" key="1">
    <source>
        <dbReference type="HAMAP-Rule" id="MF_00056"/>
    </source>
</evidence>
<organism>
    <name type="scientific">Rhodopseudomonas palustris (strain HaA2)</name>
    <dbReference type="NCBI Taxonomy" id="316058"/>
    <lineage>
        <taxon>Bacteria</taxon>
        <taxon>Pseudomonadati</taxon>
        <taxon>Pseudomonadota</taxon>
        <taxon>Alphaproteobacteria</taxon>
        <taxon>Hyphomicrobiales</taxon>
        <taxon>Nitrobacteraceae</taxon>
        <taxon>Rhodopseudomonas</taxon>
    </lineage>
</organism>
<comment type="catalytic activity">
    <reaction evidence="1">
        <text>D-arabinose 5-phosphate + phosphoenolpyruvate + H2O = 3-deoxy-alpha-D-manno-2-octulosonate-8-phosphate + phosphate</text>
        <dbReference type="Rhea" id="RHEA:14053"/>
        <dbReference type="ChEBI" id="CHEBI:15377"/>
        <dbReference type="ChEBI" id="CHEBI:43474"/>
        <dbReference type="ChEBI" id="CHEBI:57693"/>
        <dbReference type="ChEBI" id="CHEBI:58702"/>
        <dbReference type="ChEBI" id="CHEBI:85985"/>
        <dbReference type="EC" id="2.5.1.55"/>
    </reaction>
</comment>
<comment type="pathway">
    <text evidence="1">Carbohydrate biosynthesis; 3-deoxy-D-manno-octulosonate biosynthesis; 3-deoxy-D-manno-octulosonate from D-ribulose 5-phosphate: step 2/3.</text>
</comment>
<comment type="pathway">
    <text evidence="1">Bacterial outer membrane biogenesis; lipopolysaccharide biosynthesis.</text>
</comment>
<comment type="subcellular location">
    <subcellularLocation>
        <location evidence="1">Cytoplasm</location>
    </subcellularLocation>
</comment>
<comment type="similarity">
    <text evidence="1">Belongs to the KdsA family.</text>
</comment>
<proteinExistence type="inferred from homology"/>
<dbReference type="EC" id="2.5.1.55" evidence="1"/>
<dbReference type="EMBL" id="CP000250">
    <property type="protein sequence ID" value="ABD07486.1"/>
    <property type="molecule type" value="Genomic_DNA"/>
</dbReference>
<dbReference type="RefSeq" id="WP_011441671.1">
    <property type="nucleotide sequence ID" value="NC_007778.1"/>
</dbReference>
<dbReference type="SMR" id="Q2IWC4"/>
<dbReference type="STRING" id="316058.RPB_2784"/>
<dbReference type="KEGG" id="rpb:RPB_2784"/>
<dbReference type="eggNOG" id="COG2877">
    <property type="taxonomic scope" value="Bacteria"/>
</dbReference>
<dbReference type="HOGENOM" id="CLU_036666_0_0_5"/>
<dbReference type="OrthoDB" id="9776934at2"/>
<dbReference type="UniPathway" id="UPA00030"/>
<dbReference type="UniPathway" id="UPA00357">
    <property type="reaction ID" value="UER00474"/>
</dbReference>
<dbReference type="Proteomes" id="UP000008809">
    <property type="component" value="Chromosome"/>
</dbReference>
<dbReference type="GO" id="GO:0005737">
    <property type="term" value="C:cytoplasm"/>
    <property type="evidence" value="ECO:0007669"/>
    <property type="project" value="UniProtKB-SubCell"/>
</dbReference>
<dbReference type="GO" id="GO:0008676">
    <property type="term" value="F:3-deoxy-8-phosphooctulonate synthase activity"/>
    <property type="evidence" value="ECO:0007669"/>
    <property type="project" value="UniProtKB-UniRule"/>
</dbReference>
<dbReference type="GO" id="GO:0019294">
    <property type="term" value="P:keto-3-deoxy-D-manno-octulosonic acid biosynthetic process"/>
    <property type="evidence" value="ECO:0007669"/>
    <property type="project" value="UniProtKB-UniRule"/>
</dbReference>
<dbReference type="Gene3D" id="3.20.20.70">
    <property type="entry name" value="Aldolase class I"/>
    <property type="match status" value="1"/>
</dbReference>
<dbReference type="HAMAP" id="MF_00056">
    <property type="entry name" value="KDO8P_synth"/>
    <property type="match status" value="1"/>
</dbReference>
<dbReference type="InterPro" id="IPR013785">
    <property type="entry name" value="Aldolase_TIM"/>
</dbReference>
<dbReference type="InterPro" id="IPR006218">
    <property type="entry name" value="DAHP1/KDSA"/>
</dbReference>
<dbReference type="InterPro" id="IPR006269">
    <property type="entry name" value="KDO8P_synthase"/>
</dbReference>
<dbReference type="NCBIfam" id="TIGR01362">
    <property type="entry name" value="KDO8P_synth"/>
    <property type="match status" value="1"/>
</dbReference>
<dbReference type="NCBIfam" id="NF003543">
    <property type="entry name" value="PRK05198.1"/>
    <property type="match status" value="1"/>
</dbReference>
<dbReference type="PANTHER" id="PTHR21057">
    <property type="entry name" value="PHOSPHO-2-DEHYDRO-3-DEOXYHEPTONATE ALDOLASE"/>
    <property type="match status" value="1"/>
</dbReference>
<dbReference type="Pfam" id="PF00793">
    <property type="entry name" value="DAHP_synth_1"/>
    <property type="match status" value="1"/>
</dbReference>
<dbReference type="SUPFAM" id="SSF51569">
    <property type="entry name" value="Aldolase"/>
    <property type="match status" value="1"/>
</dbReference>
<gene>
    <name evidence="1" type="primary">kdsA</name>
    <name type="ordered locus">RPB_2784</name>
</gene>